<feature type="chain" id="PRO_0000097886" description="Redox-sensing transcriptional repressor Rex">
    <location>
        <begin position="1"/>
        <end position="220"/>
    </location>
</feature>
<feature type="DNA-binding region" description="H-T-H motif" evidence="1">
    <location>
        <begin position="25"/>
        <end position="64"/>
    </location>
</feature>
<feature type="binding site" evidence="1">
    <location>
        <begin position="99"/>
        <end position="104"/>
    </location>
    <ligand>
        <name>NAD(+)</name>
        <dbReference type="ChEBI" id="CHEBI:57540"/>
    </ligand>
</feature>
<keyword id="KW-0963">Cytoplasm</keyword>
<keyword id="KW-0238">DNA-binding</keyword>
<keyword id="KW-0520">NAD</keyword>
<keyword id="KW-1185">Reference proteome</keyword>
<keyword id="KW-0678">Repressor</keyword>
<keyword id="KW-0804">Transcription</keyword>
<keyword id="KW-0805">Transcription regulation</keyword>
<dbReference type="EMBL" id="AE015928">
    <property type="protein sequence ID" value="AAO78987.1"/>
    <property type="molecule type" value="Genomic_DNA"/>
</dbReference>
<dbReference type="RefSeq" id="NP_812793.1">
    <property type="nucleotide sequence ID" value="NC_004663.1"/>
</dbReference>
<dbReference type="RefSeq" id="WP_008760805.1">
    <property type="nucleotide sequence ID" value="NZ_UYXG01000011.1"/>
</dbReference>
<dbReference type="SMR" id="Q8A0Y9"/>
<dbReference type="STRING" id="226186.BT_3882"/>
<dbReference type="PaxDb" id="226186-BT_3882"/>
<dbReference type="EnsemblBacteria" id="AAO78987">
    <property type="protein sequence ID" value="AAO78987"/>
    <property type="gene ID" value="BT_3882"/>
</dbReference>
<dbReference type="KEGG" id="bth:BT_3882"/>
<dbReference type="PATRIC" id="fig|226186.12.peg.3947"/>
<dbReference type="eggNOG" id="COG2344">
    <property type="taxonomic scope" value="Bacteria"/>
</dbReference>
<dbReference type="HOGENOM" id="CLU_061534_1_0_10"/>
<dbReference type="InParanoid" id="Q8A0Y9"/>
<dbReference type="OrthoDB" id="9784760at2"/>
<dbReference type="Proteomes" id="UP000001414">
    <property type="component" value="Chromosome"/>
</dbReference>
<dbReference type="GO" id="GO:0005737">
    <property type="term" value="C:cytoplasm"/>
    <property type="evidence" value="ECO:0007669"/>
    <property type="project" value="UniProtKB-SubCell"/>
</dbReference>
<dbReference type="GO" id="GO:0003677">
    <property type="term" value="F:DNA binding"/>
    <property type="evidence" value="ECO:0007669"/>
    <property type="project" value="UniProtKB-UniRule"/>
</dbReference>
<dbReference type="GO" id="GO:0003700">
    <property type="term" value="F:DNA-binding transcription factor activity"/>
    <property type="evidence" value="ECO:0007669"/>
    <property type="project" value="UniProtKB-UniRule"/>
</dbReference>
<dbReference type="GO" id="GO:0045892">
    <property type="term" value="P:negative regulation of DNA-templated transcription"/>
    <property type="evidence" value="ECO:0007669"/>
    <property type="project" value="InterPro"/>
</dbReference>
<dbReference type="GO" id="GO:0051775">
    <property type="term" value="P:response to redox state"/>
    <property type="evidence" value="ECO:0007669"/>
    <property type="project" value="InterPro"/>
</dbReference>
<dbReference type="Gene3D" id="3.40.50.720">
    <property type="entry name" value="NAD(P)-binding Rossmann-like Domain"/>
    <property type="match status" value="1"/>
</dbReference>
<dbReference type="Gene3D" id="1.10.10.10">
    <property type="entry name" value="Winged helix-like DNA-binding domain superfamily/Winged helix DNA-binding domain"/>
    <property type="match status" value="1"/>
</dbReference>
<dbReference type="HAMAP" id="MF_01131">
    <property type="entry name" value="Rex"/>
    <property type="match status" value="1"/>
</dbReference>
<dbReference type="InterPro" id="IPR003781">
    <property type="entry name" value="CoA-bd"/>
</dbReference>
<dbReference type="InterPro" id="IPR036291">
    <property type="entry name" value="NAD(P)-bd_dom_sf"/>
</dbReference>
<dbReference type="InterPro" id="IPR009718">
    <property type="entry name" value="Rex_DNA-bd_C_dom"/>
</dbReference>
<dbReference type="InterPro" id="IPR022876">
    <property type="entry name" value="Tscrpt_rep_Rex"/>
</dbReference>
<dbReference type="InterPro" id="IPR036388">
    <property type="entry name" value="WH-like_DNA-bd_sf"/>
</dbReference>
<dbReference type="InterPro" id="IPR036390">
    <property type="entry name" value="WH_DNA-bd_sf"/>
</dbReference>
<dbReference type="NCBIfam" id="NF003994">
    <property type="entry name" value="PRK05472.2-3"/>
    <property type="match status" value="1"/>
</dbReference>
<dbReference type="NCBIfam" id="NF003995">
    <property type="entry name" value="PRK05472.2-4"/>
    <property type="match status" value="1"/>
</dbReference>
<dbReference type="NCBIfam" id="NF003996">
    <property type="entry name" value="PRK05472.2-5"/>
    <property type="match status" value="1"/>
</dbReference>
<dbReference type="PANTHER" id="PTHR35786">
    <property type="entry name" value="REDOX-SENSING TRANSCRIPTIONAL REPRESSOR REX"/>
    <property type="match status" value="1"/>
</dbReference>
<dbReference type="PANTHER" id="PTHR35786:SF1">
    <property type="entry name" value="REDOX-SENSING TRANSCRIPTIONAL REPRESSOR REX 1"/>
    <property type="match status" value="1"/>
</dbReference>
<dbReference type="Pfam" id="PF02629">
    <property type="entry name" value="CoA_binding"/>
    <property type="match status" value="1"/>
</dbReference>
<dbReference type="Pfam" id="PF06971">
    <property type="entry name" value="Put_DNA-bind_N"/>
    <property type="match status" value="1"/>
</dbReference>
<dbReference type="SMART" id="SM00881">
    <property type="entry name" value="CoA_binding"/>
    <property type="match status" value="1"/>
</dbReference>
<dbReference type="SUPFAM" id="SSF51735">
    <property type="entry name" value="NAD(P)-binding Rossmann-fold domains"/>
    <property type="match status" value="1"/>
</dbReference>
<dbReference type="SUPFAM" id="SSF46785">
    <property type="entry name" value="Winged helix' DNA-binding domain"/>
    <property type="match status" value="1"/>
</dbReference>
<reference key="1">
    <citation type="journal article" date="2003" name="Science">
        <title>A genomic view of the human-Bacteroides thetaiotaomicron symbiosis.</title>
        <authorList>
            <person name="Xu J."/>
            <person name="Bjursell M.K."/>
            <person name="Himrod J."/>
            <person name="Deng S."/>
            <person name="Carmichael L.K."/>
            <person name="Chiang H.C."/>
            <person name="Hooper L.V."/>
            <person name="Gordon J.I."/>
        </authorList>
    </citation>
    <scope>NUCLEOTIDE SEQUENCE [LARGE SCALE GENOMIC DNA]</scope>
    <source>
        <strain>ATCC 29148 / DSM 2079 / JCM 5827 / CCUG 10774 / NCTC 10582 / VPI-5482 / E50</strain>
    </source>
</reference>
<name>REX_BACTN</name>
<protein>
    <recommendedName>
        <fullName evidence="1">Redox-sensing transcriptional repressor Rex</fullName>
    </recommendedName>
</protein>
<organism>
    <name type="scientific">Bacteroides thetaiotaomicron (strain ATCC 29148 / DSM 2079 / JCM 5827 / CCUG 10774 / NCTC 10582 / VPI-5482 / E50)</name>
    <dbReference type="NCBI Taxonomy" id="226186"/>
    <lineage>
        <taxon>Bacteria</taxon>
        <taxon>Pseudomonadati</taxon>
        <taxon>Bacteroidota</taxon>
        <taxon>Bacteroidia</taxon>
        <taxon>Bacteroidales</taxon>
        <taxon>Bacteroidaceae</taxon>
        <taxon>Bacteroides</taxon>
    </lineage>
</organism>
<comment type="function">
    <text evidence="1">Modulates transcription in response to changes in cellular NADH/NAD(+) redox state.</text>
</comment>
<comment type="subunit">
    <text evidence="1">Homodimer.</text>
</comment>
<comment type="subcellular location">
    <subcellularLocation>
        <location evidence="1">Cytoplasm</location>
    </subcellularLocation>
</comment>
<comment type="similarity">
    <text evidence="1">Belongs to the transcriptional regulatory Rex family.</text>
</comment>
<proteinExistence type="inferred from homology"/>
<accession>Q8A0Y9</accession>
<gene>
    <name evidence="1" type="primary">rex</name>
    <name type="ordered locus">BT_3882</name>
</gene>
<sequence length="220" mass="24759">MAENQKIQQIDCTKVPEPTLRRLPWYLSNVKLLKQRGERFVSSTQISKEINIDASQIAKDLSYVNISGRTRVGYEVDALIEVLEHFLGFTEIHKAFLFGVGSLGGALLQDSGLKHFGLEIVAAFDVDPTLVGTNLNGIPIYHSDDFLKKMEEYDVQIGVLTVPIEIAQCITDMMVDGGIKAVWNFTPFRIRVPEDIVVQNTSLYAHLAVMFNRLNFNEIK</sequence>
<evidence type="ECO:0000255" key="1">
    <source>
        <dbReference type="HAMAP-Rule" id="MF_01131"/>
    </source>
</evidence>